<feature type="chain" id="PRO_0000131460" description="Small ribosomal subunit protein uS5">
    <location>
        <begin position="1"/>
        <end position="166"/>
    </location>
</feature>
<feature type="domain" description="S5 DRBM" evidence="1">
    <location>
        <begin position="11"/>
        <end position="74"/>
    </location>
</feature>
<accession>Q81VR3</accession>
<accession>Q6I4R7</accession>
<accession>Q6KYG3</accession>
<protein>
    <recommendedName>
        <fullName evidence="1">Small ribosomal subunit protein uS5</fullName>
    </recommendedName>
    <alternativeName>
        <fullName evidence="2">30S ribosomal protein S5</fullName>
    </alternativeName>
</protein>
<evidence type="ECO:0000255" key="1">
    <source>
        <dbReference type="HAMAP-Rule" id="MF_01307"/>
    </source>
</evidence>
<evidence type="ECO:0000305" key="2"/>
<comment type="function">
    <text evidence="1">With S4 and S12 plays an important role in translational accuracy.</text>
</comment>
<comment type="function">
    <text evidence="1">Located at the back of the 30S subunit body where it stabilizes the conformation of the head with respect to the body.</text>
</comment>
<comment type="subunit">
    <text evidence="1">Part of the 30S ribosomal subunit. Contacts proteins S4 and S8.</text>
</comment>
<comment type="domain">
    <text>The N-terminal domain interacts with the head of the 30S subunit; the C-terminal domain interacts with the body and contacts protein S4. The interaction surface between S4 and S5 is involved in control of translational fidelity.</text>
</comment>
<comment type="similarity">
    <text evidence="1">Belongs to the universal ribosomal protein uS5 family.</text>
</comment>
<sequence length="166" mass="17529">MHRIDPSKLELEERVVTINRVAKVVKGGRRFRFAALVVVGDKNGHVGFGTGKAQEVPDAIRKAIEDAKKNLIAVPLVGTTIPHTINGHFGAGEVFLKPAAEGTGVIAGGPVRAVLELAGVQDILSKSLGSNTPINMIRATVNGLSELKRAEDVAKLRGKSVEELLG</sequence>
<gene>
    <name evidence="1" type="primary">rpsE</name>
    <name type="ordered locus">BA_0127</name>
    <name type="ordered locus">GBAA_0127</name>
    <name type="ordered locus">BAS0127</name>
</gene>
<reference key="1">
    <citation type="journal article" date="2003" name="Nature">
        <title>The genome sequence of Bacillus anthracis Ames and comparison to closely related bacteria.</title>
        <authorList>
            <person name="Read T.D."/>
            <person name="Peterson S.N."/>
            <person name="Tourasse N.J."/>
            <person name="Baillie L.W."/>
            <person name="Paulsen I.T."/>
            <person name="Nelson K.E."/>
            <person name="Tettelin H."/>
            <person name="Fouts D.E."/>
            <person name="Eisen J.A."/>
            <person name="Gill S.R."/>
            <person name="Holtzapple E.K."/>
            <person name="Okstad O.A."/>
            <person name="Helgason E."/>
            <person name="Rilstone J."/>
            <person name="Wu M."/>
            <person name="Kolonay J.F."/>
            <person name="Beanan M.J."/>
            <person name="Dodson R.J."/>
            <person name="Brinkac L.M."/>
            <person name="Gwinn M.L."/>
            <person name="DeBoy R.T."/>
            <person name="Madpu R."/>
            <person name="Daugherty S.C."/>
            <person name="Durkin A.S."/>
            <person name="Haft D.H."/>
            <person name="Nelson W.C."/>
            <person name="Peterson J.D."/>
            <person name="Pop M."/>
            <person name="Khouri H.M."/>
            <person name="Radune D."/>
            <person name="Benton J.L."/>
            <person name="Mahamoud Y."/>
            <person name="Jiang L."/>
            <person name="Hance I.R."/>
            <person name="Weidman J.F."/>
            <person name="Berry K.J."/>
            <person name="Plaut R.D."/>
            <person name="Wolf A.M."/>
            <person name="Watkins K.L."/>
            <person name="Nierman W.C."/>
            <person name="Hazen A."/>
            <person name="Cline R.T."/>
            <person name="Redmond C."/>
            <person name="Thwaite J.E."/>
            <person name="White O."/>
            <person name="Salzberg S.L."/>
            <person name="Thomason B."/>
            <person name="Friedlander A.M."/>
            <person name="Koehler T.M."/>
            <person name="Hanna P.C."/>
            <person name="Kolstoe A.-B."/>
            <person name="Fraser C.M."/>
        </authorList>
    </citation>
    <scope>NUCLEOTIDE SEQUENCE [LARGE SCALE GENOMIC DNA]</scope>
    <source>
        <strain>Ames / isolate Porton</strain>
    </source>
</reference>
<reference key="2">
    <citation type="journal article" date="2009" name="J. Bacteriol.">
        <title>The complete genome sequence of Bacillus anthracis Ames 'Ancestor'.</title>
        <authorList>
            <person name="Ravel J."/>
            <person name="Jiang L."/>
            <person name="Stanley S.T."/>
            <person name="Wilson M.R."/>
            <person name="Decker R.S."/>
            <person name="Read T.D."/>
            <person name="Worsham P."/>
            <person name="Keim P.S."/>
            <person name="Salzberg S.L."/>
            <person name="Fraser-Liggett C.M."/>
            <person name="Rasko D.A."/>
        </authorList>
    </citation>
    <scope>NUCLEOTIDE SEQUENCE [LARGE SCALE GENOMIC DNA]</scope>
    <source>
        <strain>Ames ancestor</strain>
    </source>
</reference>
<reference key="3">
    <citation type="submission" date="2004-01" db="EMBL/GenBank/DDBJ databases">
        <title>Complete genome sequence of Bacillus anthracis Sterne.</title>
        <authorList>
            <person name="Brettin T.S."/>
            <person name="Bruce D."/>
            <person name="Challacombe J.F."/>
            <person name="Gilna P."/>
            <person name="Han C."/>
            <person name="Hill K."/>
            <person name="Hitchcock P."/>
            <person name="Jackson P."/>
            <person name="Keim P."/>
            <person name="Longmire J."/>
            <person name="Lucas S."/>
            <person name="Okinaka R."/>
            <person name="Richardson P."/>
            <person name="Rubin E."/>
            <person name="Tice H."/>
        </authorList>
    </citation>
    <scope>NUCLEOTIDE SEQUENCE [LARGE SCALE GENOMIC DNA]</scope>
    <source>
        <strain>Sterne</strain>
    </source>
</reference>
<organism>
    <name type="scientific">Bacillus anthracis</name>
    <dbReference type="NCBI Taxonomy" id="1392"/>
    <lineage>
        <taxon>Bacteria</taxon>
        <taxon>Bacillati</taxon>
        <taxon>Bacillota</taxon>
        <taxon>Bacilli</taxon>
        <taxon>Bacillales</taxon>
        <taxon>Bacillaceae</taxon>
        <taxon>Bacillus</taxon>
        <taxon>Bacillus cereus group</taxon>
    </lineage>
</organism>
<proteinExistence type="inferred from homology"/>
<keyword id="KW-1185">Reference proteome</keyword>
<keyword id="KW-0687">Ribonucleoprotein</keyword>
<keyword id="KW-0689">Ribosomal protein</keyword>
<keyword id="KW-0694">RNA-binding</keyword>
<keyword id="KW-0699">rRNA-binding</keyword>
<dbReference type="EMBL" id="AE016879">
    <property type="protein sequence ID" value="AAP24181.1"/>
    <property type="molecule type" value="Genomic_DNA"/>
</dbReference>
<dbReference type="EMBL" id="AE017334">
    <property type="protein sequence ID" value="AAT29207.1"/>
    <property type="molecule type" value="Genomic_DNA"/>
</dbReference>
<dbReference type="EMBL" id="AE017225">
    <property type="protein sequence ID" value="AAT52464.1"/>
    <property type="molecule type" value="Genomic_DNA"/>
</dbReference>
<dbReference type="RefSeq" id="NP_842695.1">
    <property type="nucleotide sequence ID" value="NC_003997.3"/>
</dbReference>
<dbReference type="RefSeq" id="WP_000554646.1">
    <property type="nucleotide sequence ID" value="NZ_WXXJ01000051.1"/>
</dbReference>
<dbReference type="RefSeq" id="YP_026413.1">
    <property type="nucleotide sequence ID" value="NC_005945.1"/>
</dbReference>
<dbReference type="SMR" id="Q81VR3"/>
<dbReference type="STRING" id="261594.GBAA_0127"/>
<dbReference type="DNASU" id="1083790"/>
<dbReference type="GeneID" id="93010926"/>
<dbReference type="KEGG" id="ban:BA_0127"/>
<dbReference type="KEGG" id="bar:GBAA_0127"/>
<dbReference type="KEGG" id="bat:BAS0127"/>
<dbReference type="PATRIC" id="fig|198094.11.peg.124"/>
<dbReference type="eggNOG" id="COG0098">
    <property type="taxonomic scope" value="Bacteria"/>
</dbReference>
<dbReference type="HOGENOM" id="CLU_065898_2_2_9"/>
<dbReference type="OMA" id="GIKDVWT"/>
<dbReference type="OrthoDB" id="9809045at2"/>
<dbReference type="Proteomes" id="UP000000427">
    <property type="component" value="Chromosome"/>
</dbReference>
<dbReference type="Proteomes" id="UP000000594">
    <property type="component" value="Chromosome"/>
</dbReference>
<dbReference type="GO" id="GO:0015935">
    <property type="term" value="C:small ribosomal subunit"/>
    <property type="evidence" value="ECO:0007669"/>
    <property type="project" value="InterPro"/>
</dbReference>
<dbReference type="GO" id="GO:0019843">
    <property type="term" value="F:rRNA binding"/>
    <property type="evidence" value="ECO:0007669"/>
    <property type="project" value="UniProtKB-UniRule"/>
</dbReference>
<dbReference type="GO" id="GO:0003735">
    <property type="term" value="F:structural constituent of ribosome"/>
    <property type="evidence" value="ECO:0007669"/>
    <property type="project" value="InterPro"/>
</dbReference>
<dbReference type="GO" id="GO:0006412">
    <property type="term" value="P:translation"/>
    <property type="evidence" value="ECO:0007669"/>
    <property type="project" value="UniProtKB-UniRule"/>
</dbReference>
<dbReference type="FunFam" id="3.30.160.20:FF:000001">
    <property type="entry name" value="30S ribosomal protein S5"/>
    <property type="match status" value="1"/>
</dbReference>
<dbReference type="FunFam" id="3.30.230.10:FF:000002">
    <property type="entry name" value="30S ribosomal protein S5"/>
    <property type="match status" value="1"/>
</dbReference>
<dbReference type="Gene3D" id="3.30.160.20">
    <property type="match status" value="1"/>
</dbReference>
<dbReference type="Gene3D" id="3.30.230.10">
    <property type="match status" value="1"/>
</dbReference>
<dbReference type="HAMAP" id="MF_01307_B">
    <property type="entry name" value="Ribosomal_uS5_B"/>
    <property type="match status" value="1"/>
</dbReference>
<dbReference type="InterPro" id="IPR020568">
    <property type="entry name" value="Ribosomal_Su5_D2-typ_SF"/>
</dbReference>
<dbReference type="InterPro" id="IPR000851">
    <property type="entry name" value="Ribosomal_uS5"/>
</dbReference>
<dbReference type="InterPro" id="IPR005712">
    <property type="entry name" value="Ribosomal_uS5_bac-type"/>
</dbReference>
<dbReference type="InterPro" id="IPR005324">
    <property type="entry name" value="Ribosomal_uS5_C"/>
</dbReference>
<dbReference type="InterPro" id="IPR013810">
    <property type="entry name" value="Ribosomal_uS5_N"/>
</dbReference>
<dbReference type="InterPro" id="IPR018192">
    <property type="entry name" value="Ribosomal_uS5_N_CS"/>
</dbReference>
<dbReference type="InterPro" id="IPR014721">
    <property type="entry name" value="Ribsml_uS5_D2-typ_fold_subgr"/>
</dbReference>
<dbReference type="NCBIfam" id="TIGR01021">
    <property type="entry name" value="rpsE_bact"/>
    <property type="match status" value="1"/>
</dbReference>
<dbReference type="PANTHER" id="PTHR48277">
    <property type="entry name" value="MITOCHONDRIAL RIBOSOMAL PROTEIN S5"/>
    <property type="match status" value="1"/>
</dbReference>
<dbReference type="PANTHER" id="PTHR48277:SF1">
    <property type="entry name" value="MITOCHONDRIAL RIBOSOMAL PROTEIN S5"/>
    <property type="match status" value="1"/>
</dbReference>
<dbReference type="Pfam" id="PF00333">
    <property type="entry name" value="Ribosomal_S5"/>
    <property type="match status" value="1"/>
</dbReference>
<dbReference type="Pfam" id="PF03719">
    <property type="entry name" value="Ribosomal_S5_C"/>
    <property type="match status" value="1"/>
</dbReference>
<dbReference type="SUPFAM" id="SSF54768">
    <property type="entry name" value="dsRNA-binding domain-like"/>
    <property type="match status" value="1"/>
</dbReference>
<dbReference type="SUPFAM" id="SSF54211">
    <property type="entry name" value="Ribosomal protein S5 domain 2-like"/>
    <property type="match status" value="1"/>
</dbReference>
<dbReference type="PROSITE" id="PS00585">
    <property type="entry name" value="RIBOSOMAL_S5"/>
    <property type="match status" value="1"/>
</dbReference>
<dbReference type="PROSITE" id="PS50881">
    <property type="entry name" value="S5_DSRBD"/>
    <property type="match status" value="1"/>
</dbReference>
<name>RS5_BACAN</name>